<feature type="chain" id="PRO_1000165743" description="Large ribosomal subunit protein uL2">
    <location>
        <begin position="1"/>
        <end position="282"/>
    </location>
</feature>
<feature type="region of interest" description="Disordered" evidence="2">
    <location>
        <begin position="230"/>
        <end position="282"/>
    </location>
</feature>
<feature type="compositionally biased region" description="Basic residues" evidence="2">
    <location>
        <begin position="265"/>
        <end position="282"/>
    </location>
</feature>
<comment type="function">
    <text evidence="1">One of the primary rRNA binding proteins. Required for association of the 30S and 50S subunits to form the 70S ribosome, for tRNA binding and peptide bond formation. It has been suggested to have peptidyltransferase activity; this is somewhat controversial. Makes several contacts with the 16S rRNA in the 70S ribosome.</text>
</comment>
<comment type="subunit">
    <text evidence="1">Part of the 50S ribosomal subunit. Forms a bridge to the 30S subunit in the 70S ribosome.</text>
</comment>
<comment type="similarity">
    <text evidence="1">Belongs to the universal ribosomal protein uL2 family.</text>
</comment>
<sequence length="282" mass="31050">MAVRKLKPTSAGRRFQTVSDFEEITRTRPEKSLTVGLTKKSGRNNLGRITSRRRGGGVKRLYRIIDFKRDKTGIEARVAHIEYDPNRTARIALLHYTDGEKRYILAPVGLKQGDVVMSGVNDRNGEVADIMPGNALPMQRIPVGTVIHNIELYPGKGGQLCRAAGTYAQLVAKEGKYALLRLPSGEVRKVLVTCVATVGQVGNVHHESIRLGKAGRNRWLGRRPKVRGVAMNPIDHPLGGGEGRSSGGRHPVSPWGMPAKGYKTRDKKKASSRLIVKRRGQK</sequence>
<organism>
    <name type="scientific">Desulfovibrio desulfuricans (strain ATCC 27774 / DSM 6949 / MB)</name>
    <dbReference type="NCBI Taxonomy" id="525146"/>
    <lineage>
        <taxon>Bacteria</taxon>
        <taxon>Pseudomonadati</taxon>
        <taxon>Thermodesulfobacteriota</taxon>
        <taxon>Desulfovibrionia</taxon>
        <taxon>Desulfovibrionales</taxon>
        <taxon>Desulfovibrionaceae</taxon>
        <taxon>Desulfovibrio</taxon>
    </lineage>
</organism>
<gene>
    <name evidence="1" type="primary">rplB</name>
    <name type="ordered locus">Ddes_0663</name>
</gene>
<name>RL2_DESDA</name>
<dbReference type="EMBL" id="CP001358">
    <property type="protein sequence ID" value="ACL48571.1"/>
    <property type="molecule type" value="Genomic_DNA"/>
</dbReference>
<dbReference type="SMR" id="B8IYH5"/>
<dbReference type="STRING" id="525146.Ddes_0663"/>
<dbReference type="KEGG" id="dds:Ddes_0663"/>
<dbReference type="eggNOG" id="COG0090">
    <property type="taxonomic scope" value="Bacteria"/>
</dbReference>
<dbReference type="HOGENOM" id="CLU_036235_2_1_7"/>
<dbReference type="GO" id="GO:0015934">
    <property type="term" value="C:large ribosomal subunit"/>
    <property type="evidence" value="ECO:0007669"/>
    <property type="project" value="InterPro"/>
</dbReference>
<dbReference type="GO" id="GO:0019843">
    <property type="term" value="F:rRNA binding"/>
    <property type="evidence" value="ECO:0007669"/>
    <property type="project" value="UniProtKB-UniRule"/>
</dbReference>
<dbReference type="GO" id="GO:0003735">
    <property type="term" value="F:structural constituent of ribosome"/>
    <property type="evidence" value="ECO:0007669"/>
    <property type="project" value="InterPro"/>
</dbReference>
<dbReference type="GO" id="GO:0016740">
    <property type="term" value="F:transferase activity"/>
    <property type="evidence" value="ECO:0007669"/>
    <property type="project" value="InterPro"/>
</dbReference>
<dbReference type="GO" id="GO:0002181">
    <property type="term" value="P:cytoplasmic translation"/>
    <property type="evidence" value="ECO:0007669"/>
    <property type="project" value="TreeGrafter"/>
</dbReference>
<dbReference type="FunFam" id="2.30.30.30:FF:000001">
    <property type="entry name" value="50S ribosomal protein L2"/>
    <property type="match status" value="1"/>
</dbReference>
<dbReference type="FunFam" id="2.40.50.140:FF:000003">
    <property type="entry name" value="50S ribosomal protein L2"/>
    <property type="match status" value="1"/>
</dbReference>
<dbReference type="FunFam" id="4.10.950.10:FF:000001">
    <property type="entry name" value="50S ribosomal protein L2"/>
    <property type="match status" value="1"/>
</dbReference>
<dbReference type="Gene3D" id="2.30.30.30">
    <property type="match status" value="1"/>
</dbReference>
<dbReference type="Gene3D" id="2.40.50.140">
    <property type="entry name" value="Nucleic acid-binding proteins"/>
    <property type="match status" value="1"/>
</dbReference>
<dbReference type="Gene3D" id="4.10.950.10">
    <property type="entry name" value="Ribosomal protein L2, domain 3"/>
    <property type="match status" value="1"/>
</dbReference>
<dbReference type="HAMAP" id="MF_01320_B">
    <property type="entry name" value="Ribosomal_uL2_B"/>
    <property type="match status" value="1"/>
</dbReference>
<dbReference type="InterPro" id="IPR012340">
    <property type="entry name" value="NA-bd_OB-fold"/>
</dbReference>
<dbReference type="InterPro" id="IPR014722">
    <property type="entry name" value="Rib_uL2_dom2"/>
</dbReference>
<dbReference type="InterPro" id="IPR002171">
    <property type="entry name" value="Ribosomal_uL2"/>
</dbReference>
<dbReference type="InterPro" id="IPR005880">
    <property type="entry name" value="Ribosomal_uL2_bac/org-type"/>
</dbReference>
<dbReference type="InterPro" id="IPR022669">
    <property type="entry name" value="Ribosomal_uL2_C"/>
</dbReference>
<dbReference type="InterPro" id="IPR022671">
    <property type="entry name" value="Ribosomal_uL2_CS"/>
</dbReference>
<dbReference type="InterPro" id="IPR014726">
    <property type="entry name" value="Ribosomal_uL2_dom3"/>
</dbReference>
<dbReference type="InterPro" id="IPR022666">
    <property type="entry name" value="Ribosomal_uL2_RNA-bd_dom"/>
</dbReference>
<dbReference type="InterPro" id="IPR008991">
    <property type="entry name" value="Translation_prot_SH3-like_sf"/>
</dbReference>
<dbReference type="NCBIfam" id="TIGR01171">
    <property type="entry name" value="rplB_bact"/>
    <property type="match status" value="1"/>
</dbReference>
<dbReference type="PANTHER" id="PTHR13691:SF5">
    <property type="entry name" value="LARGE RIBOSOMAL SUBUNIT PROTEIN UL2M"/>
    <property type="match status" value="1"/>
</dbReference>
<dbReference type="PANTHER" id="PTHR13691">
    <property type="entry name" value="RIBOSOMAL PROTEIN L2"/>
    <property type="match status" value="1"/>
</dbReference>
<dbReference type="Pfam" id="PF00181">
    <property type="entry name" value="Ribosomal_L2"/>
    <property type="match status" value="1"/>
</dbReference>
<dbReference type="Pfam" id="PF03947">
    <property type="entry name" value="Ribosomal_L2_C"/>
    <property type="match status" value="1"/>
</dbReference>
<dbReference type="PIRSF" id="PIRSF002158">
    <property type="entry name" value="Ribosomal_L2"/>
    <property type="match status" value="1"/>
</dbReference>
<dbReference type="SMART" id="SM01383">
    <property type="entry name" value="Ribosomal_L2"/>
    <property type="match status" value="1"/>
</dbReference>
<dbReference type="SMART" id="SM01382">
    <property type="entry name" value="Ribosomal_L2_C"/>
    <property type="match status" value="1"/>
</dbReference>
<dbReference type="SUPFAM" id="SSF50249">
    <property type="entry name" value="Nucleic acid-binding proteins"/>
    <property type="match status" value="1"/>
</dbReference>
<dbReference type="SUPFAM" id="SSF50104">
    <property type="entry name" value="Translation proteins SH3-like domain"/>
    <property type="match status" value="1"/>
</dbReference>
<dbReference type="PROSITE" id="PS00467">
    <property type="entry name" value="RIBOSOMAL_L2"/>
    <property type="match status" value="1"/>
</dbReference>
<keyword id="KW-0687">Ribonucleoprotein</keyword>
<keyword id="KW-0689">Ribosomal protein</keyword>
<keyword id="KW-0694">RNA-binding</keyword>
<keyword id="KW-0699">rRNA-binding</keyword>
<accession>B8IYH5</accession>
<proteinExistence type="inferred from homology"/>
<protein>
    <recommendedName>
        <fullName evidence="1">Large ribosomal subunit protein uL2</fullName>
    </recommendedName>
    <alternativeName>
        <fullName evidence="3">50S ribosomal protein L2</fullName>
    </alternativeName>
</protein>
<evidence type="ECO:0000255" key="1">
    <source>
        <dbReference type="HAMAP-Rule" id="MF_01320"/>
    </source>
</evidence>
<evidence type="ECO:0000256" key="2">
    <source>
        <dbReference type="SAM" id="MobiDB-lite"/>
    </source>
</evidence>
<evidence type="ECO:0000305" key="3"/>
<reference key="1">
    <citation type="submission" date="2009-01" db="EMBL/GenBank/DDBJ databases">
        <title>Complete sequence of Desulfovibrio desulfuricans subsp. desulfuricans str. ATCC 27774.</title>
        <authorList>
            <consortium name="US DOE Joint Genome Institute"/>
            <person name="Lucas S."/>
            <person name="Copeland A."/>
            <person name="Lapidus A."/>
            <person name="Glavina del Rio T."/>
            <person name="Tice H."/>
            <person name="Bruce D."/>
            <person name="Goodwin L."/>
            <person name="Pitluck S."/>
            <person name="Sims D."/>
            <person name="Lu M."/>
            <person name="Kiss H."/>
            <person name="Meineke L."/>
            <person name="Brettin T."/>
            <person name="Detter J.C."/>
            <person name="Han C."/>
            <person name="Larimer F."/>
            <person name="Land M."/>
            <person name="Hauser L."/>
            <person name="Kyrpides N."/>
            <person name="Ovchinnikova G."/>
            <person name="Hazen T.C."/>
        </authorList>
    </citation>
    <scope>NUCLEOTIDE SEQUENCE [LARGE SCALE GENOMIC DNA]</scope>
    <source>
        <strain>ATCC 27774 / DSM 6949 / MB</strain>
    </source>
</reference>